<protein>
    <recommendedName>
        <fullName>Sorting nexin 2B</fullName>
    </recommendedName>
</protein>
<accession>B9DFS6</accession>
<accession>Q0WLC3</accession>
<accession>Q570X1</accession>
<accession>Q9LYQ3</accession>
<dbReference type="EMBL" id="AL163652">
    <property type="protein sequence ID" value="CAB87268.1"/>
    <property type="status" value="ALT_INIT"/>
    <property type="molecule type" value="Genomic_DNA"/>
</dbReference>
<dbReference type="EMBL" id="CP002688">
    <property type="protein sequence ID" value="AED91112.1"/>
    <property type="molecule type" value="Genomic_DNA"/>
</dbReference>
<dbReference type="EMBL" id="CP002688">
    <property type="protein sequence ID" value="ANM70224.1"/>
    <property type="molecule type" value="Genomic_DNA"/>
</dbReference>
<dbReference type="EMBL" id="AK316886">
    <property type="protein sequence ID" value="BAH19593.1"/>
    <property type="molecule type" value="mRNA"/>
</dbReference>
<dbReference type="EMBL" id="AK220586">
    <property type="protein sequence ID" value="BAD94882.1"/>
    <property type="molecule type" value="mRNA"/>
</dbReference>
<dbReference type="EMBL" id="AK230282">
    <property type="protein sequence ID" value="BAF02084.1"/>
    <property type="molecule type" value="mRNA"/>
</dbReference>
<dbReference type="PIR" id="T48483">
    <property type="entry name" value="T48483"/>
</dbReference>
<dbReference type="RefSeq" id="NP_001331853.1">
    <property type="nucleotide sequence ID" value="NM_001342920.1"/>
</dbReference>
<dbReference type="RefSeq" id="NP_196329.2">
    <property type="nucleotide sequence ID" value="NM_120794.4"/>
</dbReference>
<dbReference type="SMR" id="B9DFS6"/>
<dbReference type="FunCoup" id="B9DFS6">
    <property type="interactions" value="317"/>
</dbReference>
<dbReference type="IntAct" id="B9DFS6">
    <property type="interactions" value="2"/>
</dbReference>
<dbReference type="STRING" id="3702.B9DFS6"/>
<dbReference type="iPTMnet" id="B9DFS6"/>
<dbReference type="PaxDb" id="3702-AT5G07120.1"/>
<dbReference type="ProteomicsDB" id="232608"/>
<dbReference type="EnsemblPlants" id="AT5G07120.1">
    <property type="protein sequence ID" value="AT5G07120.1"/>
    <property type="gene ID" value="AT5G07120"/>
</dbReference>
<dbReference type="EnsemblPlants" id="AT5G07120.2">
    <property type="protein sequence ID" value="AT5G07120.2"/>
    <property type="gene ID" value="AT5G07120"/>
</dbReference>
<dbReference type="GeneID" id="830603"/>
<dbReference type="Gramene" id="AT5G07120.1">
    <property type="protein sequence ID" value="AT5G07120.1"/>
    <property type="gene ID" value="AT5G07120"/>
</dbReference>
<dbReference type="Gramene" id="AT5G07120.2">
    <property type="protein sequence ID" value="AT5G07120.2"/>
    <property type="gene ID" value="AT5G07120"/>
</dbReference>
<dbReference type="KEGG" id="ath:AT5G07120"/>
<dbReference type="Araport" id="AT5G07120"/>
<dbReference type="TAIR" id="AT5G07120">
    <property type="gene designation" value="SNX2B"/>
</dbReference>
<dbReference type="eggNOG" id="KOG2273">
    <property type="taxonomic scope" value="Eukaryota"/>
</dbReference>
<dbReference type="HOGENOM" id="CLU_029979_0_0_1"/>
<dbReference type="InParanoid" id="B9DFS6"/>
<dbReference type="OMA" id="MASKNEM"/>
<dbReference type="PhylomeDB" id="B9DFS6"/>
<dbReference type="PRO" id="PR:B9DFS6"/>
<dbReference type="Proteomes" id="UP000006548">
    <property type="component" value="Chromosome 5"/>
</dbReference>
<dbReference type="ExpressionAtlas" id="B9DFS6">
    <property type="expression patterns" value="baseline and differential"/>
</dbReference>
<dbReference type="GO" id="GO:0005829">
    <property type="term" value="C:cytosol"/>
    <property type="evidence" value="ECO:0000314"/>
    <property type="project" value="TAIR"/>
</dbReference>
<dbReference type="GO" id="GO:0005794">
    <property type="term" value="C:Golgi apparatus"/>
    <property type="evidence" value="ECO:0007669"/>
    <property type="project" value="UniProtKB-SubCell"/>
</dbReference>
<dbReference type="GO" id="GO:0016020">
    <property type="term" value="C:membrane"/>
    <property type="evidence" value="ECO:0000314"/>
    <property type="project" value="TAIR"/>
</dbReference>
<dbReference type="GO" id="GO:0032585">
    <property type="term" value="C:multivesicular body membrane"/>
    <property type="evidence" value="ECO:0000314"/>
    <property type="project" value="TAIR"/>
</dbReference>
<dbReference type="GO" id="GO:0030904">
    <property type="term" value="C:retromer complex"/>
    <property type="evidence" value="ECO:0000304"/>
    <property type="project" value="UniProtKB"/>
</dbReference>
<dbReference type="GO" id="GO:0035091">
    <property type="term" value="F:phosphatidylinositol binding"/>
    <property type="evidence" value="ECO:0007669"/>
    <property type="project" value="InterPro"/>
</dbReference>
<dbReference type="GO" id="GO:0005543">
    <property type="term" value="F:phospholipid binding"/>
    <property type="evidence" value="ECO:0000314"/>
    <property type="project" value="TAIR"/>
</dbReference>
<dbReference type="GO" id="GO:0046982">
    <property type="term" value="F:protein heterodimerization activity"/>
    <property type="evidence" value="ECO:0000353"/>
    <property type="project" value="TAIR"/>
</dbReference>
<dbReference type="GO" id="GO:0032502">
    <property type="term" value="P:developmental process"/>
    <property type="evidence" value="ECO:0000316"/>
    <property type="project" value="TAIR"/>
</dbReference>
<dbReference type="GO" id="GO:0045324">
    <property type="term" value="P:late endosome to vacuole transport"/>
    <property type="evidence" value="ECO:0000315"/>
    <property type="project" value="UniProtKB"/>
</dbReference>
<dbReference type="GO" id="GO:0051604">
    <property type="term" value="P:protein maturation"/>
    <property type="evidence" value="ECO:0000315"/>
    <property type="project" value="TAIR"/>
</dbReference>
<dbReference type="GO" id="GO:0015031">
    <property type="term" value="P:protein transport"/>
    <property type="evidence" value="ECO:0007669"/>
    <property type="project" value="UniProtKB-KW"/>
</dbReference>
<dbReference type="GO" id="GO:0090351">
    <property type="term" value="P:seedling development"/>
    <property type="evidence" value="ECO:0000316"/>
    <property type="project" value="TAIR"/>
</dbReference>
<dbReference type="GO" id="GO:0016192">
    <property type="term" value="P:vesicle-mediated transport"/>
    <property type="evidence" value="ECO:0000315"/>
    <property type="project" value="TAIR"/>
</dbReference>
<dbReference type="CDD" id="cd07596">
    <property type="entry name" value="BAR_SNX"/>
    <property type="match status" value="1"/>
</dbReference>
<dbReference type="CDD" id="cd06865">
    <property type="entry name" value="PX_SNX_like"/>
    <property type="match status" value="1"/>
</dbReference>
<dbReference type="FunFam" id="1.20.1270.60:FF:000081">
    <property type="entry name" value="Sorting nexin 2B"/>
    <property type="match status" value="1"/>
</dbReference>
<dbReference type="FunFam" id="3.30.1520.10:FF:000059">
    <property type="entry name" value="Sorting nexin 2B"/>
    <property type="match status" value="1"/>
</dbReference>
<dbReference type="Gene3D" id="1.20.1270.60">
    <property type="entry name" value="Arfaptin homology (AH) domain/BAR domain"/>
    <property type="match status" value="1"/>
</dbReference>
<dbReference type="Gene3D" id="3.30.1520.10">
    <property type="entry name" value="Phox-like domain"/>
    <property type="match status" value="1"/>
</dbReference>
<dbReference type="InterPro" id="IPR027267">
    <property type="entry name" value="AH/BAR_dom_sf"/>
</dbReference>
<dbReference type="InterPro" id="IPR001683">
    <property type="entry name" value="PX_dom"/>
</dbReference>
<dbReference type="InterPro" id="IPR036871">
    <property type="entry name" value="PX_dom_sf"/>
</dbReference>
<dbReference type="InterPro" id="IPR044279">
    <property type="entry name" value="SNX2A/B"/>
</dbReference>
<dbReference type="InterPro" id="IPR015404">
    <property type="entry name" value="Vps5_C"/>
</dbReference>
<dbReference type="PANTHER" id="PTHR46757:SF6">
    <property type="entry name" value="SORTING NEXIN 2B"/>
    <property type="match status" value="1"/>
</dbReference>
<dbReference type="PANTHER" id="PTHR46757">
    <property type="entry name" value="SORTING NEXIN-RELATED"/>
    <property type="match status" value="1"/>
</dbReference>
<dbReference type="Pfam" id="PF00787">
    <property type="entry name" value="PX"/>
    <property type="match status" value="1"/>
</dbReference>
<dbReference type="Pfam" id="PF09325">
    <property type="entry name" value="Vps5"/>
    <property type="match status" value="1"/>
</dbReference>
<dbReference type="SMART" id="SM00312">
    <property type="entry name" value="PX"/>
    <property type="match status" value="1"/>
</dbReference>
<dbReference type="SUPFAM" id="SSF64268">
    <property type="entry name" value="PX domain"/>
    <property type="match status" value="1"/>
</dbReference>
<dbReference type="PROSITE" id="PS50195">
    <property type="entry name" value="PX"/>
    <property type="match status" value="1"/>
</dbReference>
<proteinExistence type="evidence at protein level"/>
<feature type="chain" id="PRO_0000414721" description="Sorting nexin 2B">
    <location>
        <begin position="1"/>
        <end position="572"/>
    </location>
</feature>
<feature type="domain" description="PX" evidence="3">
    <location>
        <begin position="147"/>
        <end position="266"/>
    </location>
</feature>
<feature type="domain" description="BAR">
    <location>
        <begin position="318"/>
        <end position="572"/>
    </location>
</feature>
<feature type="region of interest" description="Disordered" evidence="4">
    <location>
        <begin position="1"/>
        <end position="97"/>
    </location>
</feature>
<feature type="region of interest" description="Disordered" evidence="4">
    <location>
        <begin position="114"/>
        <end position="136"/>
    </location>
</feature>
<feature type="compositionally biased region" description="Basic and acidic residues" evidence="4">
    <location>
        <begin position="9"/>
        <end position="30"/>
    </location>
</feature>
<feature type="compositionally biased region" description="Polar residues" evidence="4">
    <location>
        <begin position="32"/>
        <end position="53"/>
    </location>
</feature>
<feature type="compositionally biased region" description="Low complexity" evidence="4">
    <location>
        <begin position="124"/>
        <end position="136"/>
    </location>
</feature>
<feature type="binding site" evidence="1">
    <location>
        <position position="190"/>
    </location>
    <ligand>
        <name>a 1,2-diacyl-sn-glycero-3-phospho-(1D-myo-inositol-3-phosphate)</name>
        <dbReference type="ChEBI" id="CHEBI:58088"/>
    </ligand>
</feature>
<feature type="binding site" evidence="1">
    <location>
        <position position="216"/>
    </location>
    <ligand>
        <name>a 1,2-diacyl-sn-glycero-3-phospho-(1D-myo-inositol-3-phosphate)</name>
        <dbReference type="ChEBI" id="CHEBI:58088"/>
    </ligand>
</feature>
<feature type="binding site">
    <location>
        <position position="233"/>
    </location>
    <ligand>
        <name>a 1,2-diacyl-sn-glycero-3-phospho-(1D-myo-inositol-3-phosphate)</name>
        <dbReference type="ChEBI" id="CHEBI:58088"/>
    </ligand>
</feature>
<feature type="modified residue" description="Phosphoserine" evidence="2">
    <location>
        <position position="133"/>
    </location>
</feature>
<feature type="mutagenesis site" description="Abolishes phosphatidylinositol 3-phosphate binding." evidence="5">
    <original>RR</original>
    <variation>LG</variation>
    <location>
        <begin position="233"/>
        <end position="234"/>
    </location>
</feature>
<feature type="sequence conflict" description="In Ref. 4; BAD94882." evidence="7" ref="4">
    <original>V</original>
    <variation>F</variation>
    <location>
        <position position="235"/>
    </location>
</feature>
<comment type="function">
    <text evidence="5">Plays a role in vesicular protein sorting. Acts at the crossroads between the secretory and endocytic pathways. Is involved in the endosome to vacuole protein transport and, as component of the membrane-associated retromer complex, is also involved in endosome-to-Golgi retrograde transport.</text>
</comment>
<comment type="subunit">
    <text evidence="6">Homodimer. Heterodimer with SNX1 or SNX2B. Component of the retromer complex which consists of VPS29 (MAG1), VPS26 (VPS26A or VPS26B), VPS35 (VPS35A or VPS35B or VPS35C), VPS5/17 (SNX1 or SNX2A or SNX2B).</text>
</comment>
<comment type="interaction">
    <interactant intactId="EBI-5258273">
        <id>B9DFS6</id>
    </interactant>
    <interactant intactId="EBI-1543026">
        <id>Q9FG38</id>
        <label>SNX1</label>
    </interactant>
    <organismsDiffer>false</organismsDiffer>
    <experiments>7</experiments>
</comment>
<comment type="interaction">
    <interactant intactId="EBI-5258273">
        <id>B9DFS6</id>
    </interactant>
    <interactant intactId="EBI-5258249">
        <id>Q8L5Z7</id>
        <label>SNX2A</label>
    </interactant>
    <organismsDiffer>false</organismsDiffer>
    <experiments>4</experiments>
</comment>
<comment type="subcellular location">
    <subcellularLocation>
        <location>Cytoplasm</location>
    </subcellularLocation>
    <subcellularLocation>
        <location>Endosome membrane</location>
        <topology>Peripheral membrane protein</topology>
        <orientation>Cytoplasmic side</orientation>
    </subcellularLocation>
    <subcellularLocation>
        <location>Prevacuolar compartment membrane</location>
        <topology>Peripheral membrane protein</topology>
        <orientation>Cytoplasmic side</orientation>
    </subcellularLocation>
    <subcellularLocation>
        <location>Golgi apparatus</location>
        <location>trans-Golgi network membrane</location>
        <topology>Peripheral membrane protein</topology>
        <orientation>Cytoplasmic side</orientation>
    </subcellularLocation>
</comment>
<comment type="tissue specificity">
    <text evidence="5 6">Ubiquitously expressed.</text>
</comment>
<comment type="domain">
    <text>The PX domain binds phosphatidylinositol 3-phosphate which is necessary for peripheral membrane localization.</text>
</comment>
<comment type="disruption phenotype">
    <text evidence="6">Reduced rosette size and inflorescence length as well as root gravitropism defects in snx2a and snx2b double mutant.</text>
</comment>
<comment type="similarity">
    <text evidence="7">Belongs to the sorting nexin family.</text>
</comment>
<comment type="sequence caution" evidence="7">
    <conflict type="erroneous initiation">
        <sequence resource="EMBL-CDS" id="CAB87268"/>
    </conflict>
    <text>Truncated N-terminus.</text>
</comment>
<reference key="1">
    <citation type="journal article" date="2000" name="Nature">
        <title>Sequence and analysis of chromosome 5 of the plant Arabidopsis thaliana.</title>
        <authorList>
            <person name="Tabata S."/>
            <person name="Kaneko T."/>
            <person name="Nakamura Y."/>
            <person name="Kotani H."/>
            <person name="Kato T."/>
            <person name="Asamizu E."/>
            <person name="Miyajima N."/>
            <person name="Sasamoto S."/>
            <person name="Kimura T."/>
            <person name="Hosouchi T."/>
            <person name="Kawashima K."/>
            <person name="Kohara M."/>
            <person name="Matsumoto M."/>
            <person name="Matsuno A."/>
            <person name="Muraki A."/>
            <person name="Nakayama S."/>
            <person name="Nakazaki N."/>
            <person name="Naruo K."/>
            <person name="Okumura S."/>
            <person name="Shinpo S."/>
            <person name="Takeuchi C."/>
            <person name="Wada T."/>
            <person name="Watanabe A."/>
            <person name="Yamada M."/>
            <person name="Yasuda M."/>
            <person name="Sato S."/>
            <person name="de la Bastide M."/>
            <person name="Huang E."/>
            <person name="Spiegel L."/>
            <person name="Gnoj L."/>
            <person name="O'Shaughnessy A."/>
            <person name="Preston R."/>
            <person name="Habermann K."/>
            <person name="Murray J."/>
            <person name="Johnson D."/>
            <person name="Rohlfing T."/>
            <person name="Nelson J."/>
            <person name="Stoneking T."/>
            <person name="Pepin K."/>
            <person name="Spieth J."/>
            <person name="Sekhon M."/>
            <person name="Armstrong J."/>
            <person name="Becker M."/>
            <person name="Belter E."/>
            <person name="Cordum H."/>
            <person name="Cordes M."/>
            <person name="Courtney L."/>
            <person name="Courtney W."/>
            <person name="Dante M."/>
            <person name="Du H."/>
            <person name="Edwards J."/>
            <person name="Fryman J."/>
            <person name="Haakensen B."/>
            <person name="Lamar E."/>
            <person name="Latreille P."/>
            <person name="Leonard S."/>
            <person name="Meyer R."/>
            <person name="Mulvaney E."/>
            <person name="Ozersky P."/>
            <person name="Riley A."/>
            <person name="Strowmatt C."/>
            <person name="Wagner-McPherson C."/>
            <person name="Wollam A."/>
            <person name="Yoakum M."/>
            <person name="Bell M."/>
            <person name="Dedhia N."/>
            <person name="Parnell L."/>
            <person name="Shah R."/>
            <person name="Rodriguez M."/>
            <person name="Hoon See L."/>
            <person name="Vil D."/>
            <person name="Baker J."/>
            <person name="Kirchoff K."/>
            <person name="Toth K."/>
            <person name="King L."/>
            <person name="Bahret A."/>
            <person name="Miller B."/>
            <person name="Marra M.A."/>
            <person name="Martienssen R."/>
            <person name="McCombie W.R."/>
            <person name="Wilson R.K."/>
            <person name="Murphy G."/>
            <person name="Bancroft I."/>
            <person name="Volckaert G."/>
            <person name="Wambutt R."/>
            <person name="Duesterhoeft A."/>
            <person name="Stiekema W."/>
            <person name="Pohl T."/>
            <person name="Entian K.-D."/>
            <person name="Terryn N."/>
            <person name="Hartley N."/>
            <person name="Bent E."/>
            <person name="Johnson S."/>
            <person name="Langham S.-A."/>
            <person name="McCullagh B."/>
            <person name="Robben J."/>
            <person name="Grymonprez B."/>
            <person name="Zimmermann W."/>
            <person name="Ramsperger U."/>
            <person name="Wedler H."/>
            <person name="Balke K."/>
            <person name="Wedler E."/>
            <person name="Peters S."/>
            <person name="van Staveren M."/>
            <person name="Dirkse W."/>
            <person name="Mooijman P."/>
            <person name="Klein Lankhorst R."/>
            <person name="Weitzenegger T."/>
            <person name="Bothe G."/>
            <person name="Rose M."/>
            <person name="Hauf J."/>
            <person name="Berneiser S."/>
            <person name="Hempel S."/>
            <person name="Feldpausch M."/>
            <person name="Lamberth S."/>
            <person name="Villarroel R."/>
            <person name="Gielen J."/>
            <person name="Ardiles W."/>
            <person name="Bents O."/>
            <person name="Lemcke K."/>
            <person name="Kolesov G."/>
            <person name="Mayer K.F.X."/>
            <person name="Rudd S."/>
            <person name="Schoof H."/>
            <person name="Schueller C."/>
            <person name="Zaccaria P."/>
            <person name="Mewes H.-W."/>
            <person name="Bevan M."/>
            <person name="Fransz P.F."/>
        </authorList>
    </citation>
    <scope>NUCLEOTIDE SEQUENCE [LARGE SCALE GENOMIC DNA]</scope>
    <source>
        <strain>cv. Columbia</strain>
    </source>
</reference>
<reference key="2">
    <citation type="journal article" date="2017" name="Plant J.">
        <title>Araport11: a complete reannotation of the Arabidopsis thaliana reference genome.</title>
        <authorList>
            <person name="Cheng C.Y."/>
            <person name="Krishnakumar V."/>
            <person name="Chan A.P."/>
            <person name="Thibaud-Nissen F."/>
            <person name="Schobel S."/>
            <person name="Town C.D."/>
        </authorList>
    </citation>
    <scope>GENOME REANNOTATION</scope>
    <source>
        <strain>cv. Columbia</strain>
    </source>
</reference>
<reference key="3">
    <citation type="journal article" date="2009" name="DNA Res.">
        <title>Analysis of multiple occurrences of alternative splicing events in Arabidopsis thaliana using novel sequenced full-length cDNAs.</title>
        <authorList>
            <person name="Iida K."/>
            <person name="Fukami-Kobayashi K."/>
            <person name="Toyoda A."/>
            <person name="Sakaki Y."/>
            <person name="Kobayashi M."/>
            <person name="Seki M."/>
            <person name="Shinozaki K."/>
        </authorList>
    </citation>
    <scope>NUCLEOTIDE SEQUENCE [LARGE SCALE MRNA]</scope>
    <source>
        <strain>cv. Columbia</strain>
    </source>
</reference>
<reference key="4">
    <citation type="submission" date="2005-03" db="EMBL/GenBank/DDBJ databases">
        <title>Large-scale analysis of RIKEN Arabidopsis full-length (RAFL) cDNAs.</title>
        <authorList>
            <person name="Totoki Y."/>
            <person name="Seki M."/>
            <person name="Ishida J."/>
            <person name="Nakajima M."/>
            <person name="Enju A."/>
            <person name="Kamiya A."/>
            <person name="Narusaka M."/>
            <person name="Shin-i T."/>
            <person name="Nakagawa M."/>
            <person name="Sakamoto N."/>
            <person name="Oishi K."/>
            <person name="Kohara Y."/>
            <person name="Kobayashi M."/>
            <person name="Toyoda A."/>
            <person name="Sakaki Y."/>
            <person name="Sakurai T."/>
            <person name="Iida K."/>
            <person name="Akiyama K."/>
            <person name="Satou M."/>
            <person name="Toyoda T."/>
            <person name="Konagaya A."/>
            <person name="Carninci P."/>
            <person name="Kawai J."/>
            <person name="Hayashizaki Y."/>
            <person name="Shinozaki K."/>
        </authorList>
    </citation>
    <scope>NUCLEOTIDE SEQUENCE [LARGE SCALE MRNA] OF 1-341</scope>
    <scope>NUCLEOTIDE SEQUENCE [LARGE SCALE MRNA] OF 533-572</scope>
    <source>
        <strain>cv. Columbia</strain>
    </source>
</reference>
<reference key="5">
    <citation type="journal article" date="2003" name="Plant Physiol.">
        <title>Interaction of calmodulin, a sorting nexin and kinase-associated protein phosphatase with the Brassica oleracea S locus receptor kinase.</title>
        <authorList>
            <person name="Vanoosthuyse V."/>
            <person name="Tichtinsky G."/>
            <person name="Dumas C."/>
            <person name="Gaude T."/>
            <person name="Cock J.M."/>
        </authorList>
    </citation>
    <scope>IDENTIFICATION</scope>
</reference>
<reference key="6">
    <citation type="journal article" date="2006" name="Plant Cell">
        <title>Plant retromer, localized to the prevacuolar compartment and microvesicles in Arabidopsis, may interact with vacuolar sorting receptors.</title>
        <authorList>
            <person name="Oliviusson P."/>
            <person name="Heinzerling O."/>
            <person name="Hillmer S."/>
            <person name="Hinz G."/>
            <person name="Tse Y.C."/>
            <person name="Jiang L."/>
            <person name="Robinson D.G."/>
        </authorList>
    </citation>
    <scope>COMPONENT OF THE RETROMER COMPLEX</scope>
</reference>
<reference key="7">
    <citation type="journal article" date="2008" name="Mol. Plant">
        <title>Overexpression of Arabidopsis sorting nexin AtSNX2b inhibits endocytic trafficking to the vacuole.</title>
        <authorList>
            <person name="Phan N.Q."/>
            <person name="Kim S.J."/>
            <person name="Bassham D.C."/>
        </authorList>
    </citation>
    <scope>FUNCTION</scope>
    <scope>SUBCELLULAR LOCATION</scope>
    <scope>TISSUE SPECIFICITY</scope>
    <scope>PHOSPHATIDYLINOSITOL 3-PHOSPHATE BINDING</scope>
    <scope>MUTAGENESIS OF 233-ARG-ARG-234</scope>
</reference>
<reference key="8">
    <citation type="journal article" date="2010" name="Plant Cell">
        <title>Analyses of sorting nexins reveal distinct retromer-subcomplex functions in development and protein sorting in Arabidopsis thaliana.</title>
        <authorList>
            <person name="Pourcher M."/>
            <person name="Santambrogio M."/>
            <person name="Thazar N."/>
            <person name="Thierry A.M."/>
            <person name="Fobis-Loisy I."/>
            <person name="Miege C."/>
            <person name="Jaillais Y."/>
            <person name="Gaude T."/>
        </authorList>
    </citation>
    <scope>DISRUPTION PHENOTYPE</scope>
    <scope>TISSUE SPECIFICITY</scope>
    <scope>SUBCELLULAR LOCATION</scope>
    <scope>SUBUNIT</scope>
</reference>
<sequence>MMGSENDEESHLHSSKEEMEKLFLREDGDPLTKSNVNGDKSNSNYRSAMSTLFDSRHPSIVVTPADSDPLFAPPSYYSESRSPRSKPNGGDRVSSYLEPPSYADVIFSPFDDISEINGSEDGHSQSSDSLSRSPSSLSSDYIKITVSNPQKEQEATNSMIPGGSTYITYQITTRTNLSDYGGSEFSVRRRFRDIVTLADRLAESYRGFCIPPRPDKSIVESQVMQKQEFVEQRRVALEKYLRRLVAHPVIRNSDELKVFLQAQGKLPLATSTDVASRMLDGAVKLPKQLFGEGGGASSVEVVQPGRGGRDFLRMFKELRQSVSNDWGGSKPPVVEEDKEFLEKKEKMYDLEQQIINASQQAESLVKAQQDMGETMGELGLAFIKLTKFENEEAVFNSQRARANDMKNLATSAVKASRFYRELNSQTVKHLDTLHDYLGLMMAVQGAFADRSSALLTVQTLLSELSSLEARAEKLEVASSKVFGGDKSRIKKIEELKETIKVTEDSKNVAIREYEQIKENNWSEVERLDRERRADFLNMMKGFVANQVGYAEKIANVWTKVAEETRQYDRESS</sequence>
<evidence type="ECO:0000250" key="1"/>
<evidence type="ECO:0000250" key="2">
    <source>
        <dbReference type="UniProtKB" id="Q8L5Z7"/>
    </source>
</evidence>
<evidence type="ECO:0000255" key="3">
    <source>
        <dbReference type="PROSITE-ProRule" id="PRU00147"/>
    </source>
</evidence>
<evidence type="ECO:0000256" key="4">
    <source>
        <dbReference type="SAM" id="MobiDB-lite"/>
    </source>
</evidence>
<evidence type="ECO:0000269" key="5">
    <source>
    </source>
</evidence>
<evidence type="ECO:0000269" key="6">
    <source>
    </source>
</evidence>
<evidence type="ECO:0000305" key="7"/>
<keyword id="KW-0963">Cytoplasm</keyword>
<keyword id="KW-0967">Endosome</keyword>
<keyword id="KW-0333">Golgi apparatus</keyword>
<keyword id="KW-0446">Lipid-binding</keyword>
<keyword id="KW-0472">Membrane</keyword>
<keyword id="KW-0597">Phosphoprotein</keyword>
<keyword id="KW-0653">Protein transport</keyword>
<keyword id="KW-1185">Reference proteome</keyword>
<keyword id="KW-0813">Transport</keyword>
<name>SNX2B_ARATH</name>
<gene>
    <name type="primary">SNX2B</name>
    <name type="ordered locus">At5g07120</name>
    <name type="ORF">T28J14_60</name>
</gene>
<organism>
    <name type="scientific">Arabidopsis thaliana</name>
    <name type="common">Mouse-ear cress</name>
    <dbReference type="NCBI Taxonomy" id="3702"/>
    <lineage>
        <taxon>Eukaryota</taxon>
        <taxon>Viridiplantae</taxon>
        <taxon>Streptophyta</taxon>
        <taxon>Embryophyta</taxon>
        <taxon>Tracheophyta</taxon>
        <taxon>Spermatophyta</taxon>
        <taxon>Magnoliopsida</taxon>
        <taxon>eudicotyledons</taxon>
        <taxon>Gunneridae</taxon>
        <taxon>Pentapetalae</taxon>
        <taxon>rosids</taxon>
        <taxon>malvids</taxon>
        <taxon>Brassicales</taxon>
        <taxon>Brassicaceae</taxon>
        <taxon>Camelineae</taxon>
        <taxon>Arabidopsis</taxon>
    </lineage>
</organism>